<reference key="1">
    <citation type="journal article" date="2010" name="Genome Biol. Evol.">
        <title>Continuing evolution of Burkholderia mallei through genome reduction and large-scale rearrangements.</title>
        <authorList>
            <person name="Losada L."/>
            <person name="Ronning C.M."/>
            <person name="DeShazer D."/>
            <person name="Woods D."/>
            <person name="Fedorova N."/>
            <person name="Kim H.S."/>
            <person name="Shabalina S.A."/>
            <person name="Pearson T.R."/>
            <person name="Brinkac L."/>
            <person name="Tan P."/>
            <person name="Nandi T."/>
            <person name="Crabtree J."/>
            <person name="Badger J."/>
            <person name="Beckstrom-Sternberg S."/>
            <person name="Saqib M."/>
            <person name="Schutzer S.E."/>
            <person name="Keim P."/>
            <person name="Nierman W.C."/>
        </authorList>
    </citation>
    <scope>NUCLEOTIDE SEQUENCE [LARGE SCALE GENOMIC DNA]</scope>
    <source>
        <strain>668</strain>
    </source>
</reference>
<sequence length="266" mass="29919">MGQKIHPTGFRLAVSRNWASRWYANNNNFAAMLQEDIGVREYLKKKLKNASVGRVVIERPAKNARITIFSSRPGVVIGKKGEDIELLKTELQRRMGVPVHVNIEEIRKPETDAQLIADSITQQLERRIMFRRAMKRAMQNAMRLGAQGIKIMSAGRLNGIEIARTEWYREGRVPLHTLRADIDYATSEAKTTYGIIGVKVWVYKGDTLGRNDAPVVEEVTEDKRPRRNARPGDRRPRRDGEGGAPGARRGGPRRGAGKPEDGKTGE</sequence>
<keyword id="KW-0687">Ribonucleoprotein</keyword>
<keyword id="KW-0689">Ribosomal protein</keyword>
<keyword id="KW-0694">RNA-binding</keyword>
<keyword id="KW-0699">rRNA-binding</keyword>
<protein>
    <recommendedName>
        <fullName evidence="1">Small ribosomal subunit protein uS3</fullName>
    </recommendedName>
    <alternativeName>
        <fullName evidence="3">30S ribosomal protein S3</fullName>
    </alternativeName>
</protein>
<organism>
    <name type="scientific">Burkholderia pseudomallei (strain 668)</name>
    <dbReference type="NCBI Taxonomy" id="320373"/>
    <lineage>
        <taxon>Bacteria</taxon>
        <taxon>Pseudomonadati</taxon>
        <taxon>Pseudomonadota</taxon>
        <taxon>Betaproteobacteria</taxon>
        <taxon>Burkholderiales</taxon>
        <taxon>Burkholderiaceae</taxon>
        <taxon>Burkholderia</taxon>
        <taxon>pseudomallei group</taxon>
    </lineage>
</organism>
<dbReference type="EMBL" id="CP000570">
    <property type="protein sequence ID" value="ABN84330.1"/>
    <property type="molecule type" value="Genomic_DNA"/>
</dbReference>
<dbReference type="RefSeq" id="WP_004185240.1">
    <property type="nucleotide sequence ID" value="NC_009074.1"/>
</dbReference>
<dbReference type="SMR" id="A3NEH3"/>
<dbReference type="GeneID" id="93061826"/>
<dbReference type="KEGG" id="bpd:BURPS668_3740"/>
<dbReference type="HOGENOM" id="CLU_058591_0_2_4"/>
<dbReference type="GO" id="GO:0022627">
    <property type="term" value="C:cytosolic small ribosomal subunit"/>
    <property type="evidence" value="ECO:0007669"/>
    <property type="project" value="TreeGrafter"/>
</dbReference>
<dbReference type="GO" id="GO:0003729">
    <property type="term" value="F:mRNA binding"/>
    <property type="evidence" value="ECO:0007669"/>
    <property type="project" value="UniProtKB-UniRule"/>
</dbReference>
<dbReference type="GO" id="GO:0019843">
    <property type="term" value="F:rRNA binding"/>
    <property type="evidence" value="ECO:0007669"/>
    <property type="project" value="UniProtKB-UniRule"/>
</dbReference>
<dbReference type="GO" id="GO:0003735">
    <property type="term" value="F:structural constituent of ribosome"/>
    <property type="evidence" value="ECO:0007669"/>
    <property type="project" value="InterPro"/>
</dbReference>
<dbReference type="GO" id="GO:0006412">
    <property type="term" value="P:translation"/>
    <property type="evidence" value="ECO:0007669"/>
    <property type="project" value="UniProtKB-UniRule"/>
</dbReference>
<dbReference type="CDD" id="cd02412">
    <property type="entry name" value="KH-II_30S_S3"/>
    <property type="match status" value="1"/>
</dbReference>
<dbReference type="FunFam" id="3.30.1140.32:FF:000006">
    <property type="entry name" value="30S ribosomal protein S3"/>
    <property type="match status" value="1"/>
</dbReference>
<dbReference type="FunFam" id="3.30.300.20:FF:000001">
    <property type="entry name" value="30S ribosomal protein S3"/>
    <property type="match status" value="1"/>
</dbReference>
<dbReference type="Gene3D" id="3.30.300.20">
    <property type="match status" value="1"/>
</dbReference>
<dbReference type="Gene3D" id="3.30.1140.32">
    <property type="entry name" value="Ribosomal protein S3, C-terminal domain"/>
    <property type="match status" value="1"/>
</dbReference>
<dbReference type="HAMAP" id="MF_01309_B">
    <property type="entry name" value="Ribosomal_uS3_B"/>
    <property type="match status" value="1"/>
</dbReference>
<dbReference type="InterPro" id="IPR004087">
    <property type="entry name" value="KH_dom"/>
</dbReference>
<dbReference type="InterPro" id="IPR015946">
    <property type="entry name" value="KH_dom-like_a/b"/>
</dbReference>
<dbReference type="InterPro" id="IPR004044">
    <property type="entry name" value="KH_dom_type_2"/>
</dbReference>
<dbReference type="InterPro" id="IPR009019">
    <property type="entry name" value="KH_sf_prok-type"/>
</dbReference>
<dbReference type="InterPro" id="IPR036419">
    <property type="entry name" value="Ribosomal_S3_C_sf"/>
</dbReference>
<dbReference type="InterPro" id="IPR005704">
    <property type="entry name" value="Ribosomal_uS3_bac-typ"/>
</dbReference>
<dbReference type="InterPro" id="IPR001351">
    <property type="entry name" value="Ribosomal_uS3_C"/>
</dbReference>
<dbReference type="InterPro" id="IPR018280">
    <property type="entry name" value="Ribosomal_uS3_CS"/>
</dbReference>
<dbReference type="NCBIfam" id="TIGR01009">
    <property type="entry name" value="rpsC_bact"/>
    <property type="match status" value="1"/>
</dbReference>
<dbReference type="PANTHER" id="PTHR11760">
    <property type="entry name" value="30S/40S RIBOSOMAL PROTEIN S3"/>
    <property type="match status" value="1"/>
</dbReference>
<dbReference type="PANTHER" id="PTHR11760:SF19">
    <property type="entry name" value="SMALL RIBOSOMAL SUBUNIT PROTEIN US3C"/>
    <property type="match status" value="1"/>
</dbReference>
<dbReference type="Pfam" id="PF07650">
    <property type="entry name" value="KH_2"/>
    <property type="match status" value="1"/>
</dbReference>
<dbReference type="Pfam" id="PF00189">
    <property type="entry name" value="Ribosomal_S3_C"/>
    <property type="match status" value="1"/>
</dbReference>
<dbReference type="SMART" id="SM00322">
    <property type="entry name" value="KH"/>
    <property type="match status" value="1"/>
</dbReference>
<dbReference type="SUPFAM" id="SSF54814">
    <property type="entry name" value="Prokaryotic type KH domain (KH-domain type II)"/>
    <property type="match status" value="1"/>
</dbReference>
<dbReference type="SUPFAM" id="SSF54821">
    <property type="entry name" value="Ribosomal protein S3 C-terminal domain"/>
    <property type="match status" value="1"/>
</dbReference>
<dbReference type="PROSITE" id="PS50823">
    <property type="entry name" value="KH_TYPE_2"/>
    <property type="match status" value="1"/>
</dbReference>
<dbReference type="PROSITE" id="PS00548">
    <property type="entry name" value="RIBOSOMAL_S3"/>
    <property type="match status" value="1"/>
</dbReference>
<accession>A3NEH3</accession>
<name>RS3_BURP6</name>
<feature type="chain" id="PRO_1000086099" description="Small ribosomal subunit protein uS3">
    <location>
        <begin position="1"/>
        <end position="266"/>
    </location>
</feature>
<feature type="domain" description="KH type-2" evidence="1">
    <location>
        <begin position="39"/>
        <end position="107"/>
    </location>
</feature>
<feature type="region of interest" description="Disordered" evidence="2">
    <location>
        <begin position="214"/>
        <end position="266"/>
    </location>
</feature>
<feature type="compositionally biased region" description="Basic and acidic residues" evidence="2">
    <location>
        <begin position="230"/>
        <end position="241"/>
    </location>
</feature>
<feature type="compositionally biased region" description="Basic and acidic residues" evidence="2">
    <location>
        <begin position="257"/>
        <end position="266"/>
    </location>
</feature>
<gene>
    <name evidence="1" type="primary">rpsC</name>
    <name type="ordered locus">BURPS668_3740</name>
</gene>
<evidence type="ECO:0000255" key="1">
    <source>
        <dbReference type="HAMAP-Rule" id="MF_01309"/>
    </source>
</evidence>
<evidence type="ECO:0000256" key="2">
    <source>
        <dbReference type="SAM" id="MobiDB-lite"/>
    </source>
</evidence>
<evidence type="ECO:0000305" key="3"/>
<proteinExistence type="inferred from homology"/>
<comment type="function">
    <text evidence="1">Binds the lower part of the 30S subunit head. Binds mRNA in the 70S ribosome, positioning it for translation.</text>
</comment>
<comment type="subunit">
    <text evidence="1">Part of the 30S ribosomal subunit. Forms a tight complex with proteins S10 and S14.</text>
</comment>
<comment type="similarity">
    <text evidence="1">Belongs to the universal ribosomal protein uS3 family.</text>
</comment>